<name>RPIA_RHOP5</name>
<protein>
    <recommendedName>
        <fullName evidence="1">Ribose-5-phosphate isomerase A</fullName>
        <ecNumber evidence="1">5.3.1.6</ecNumber>
    </recommendedName>
    <alternativeName>
        <fullName evidence="1">Phosphoriboisomerase A</fullName>
        <shortName evidence="1">PRI</shortName>
    </alternativeName>
</protein>
<accession>Q07Q53</accession>
<evidence type="ECO:0000255" key="1">
    <source>
        <dbReference type="HAMAP-Rule" id="MF_00170"/>
    </source>
</evidence>
<gene>
    <name evidence="1" type="primary">rpiA</name>
    <name type="ordered locus">RPE_1987</name>
</gene>
<dbReference type="EC" id="5.3.1.6" evidence="1"/>
<dbReference type="EMBL" id="CP000463">
    <property type="protein sequence ID" value="ABJ05931.1"/>
    <property type="molecule type" value="Genomic_DNA"/>
</dbReference>
<dbReference type="SMR" id="Q07Q53"/>
<dbReference type="STRING" id="316055.RPE_1987"/>
<dbReference type="KEGG" id="rpe:RPE_1987"/>
<dbReference type="eggNOG" id="COG0120">
    <property type="taxonomic scope" value="Bacteria"/>
</dbReference>
<dbReference type="HOGENOM" id="CLU_056590_1_0_5"/>
<dbReference type="OrthoDB" id="5870696at2"/>
<dbReference type="UniPathway" id="UPA00115">
    <property type="reaction ID" value="UER00412"/>
</dbReference>
<dbReference type="GO" id="GO:0004751">
    <property type="term" value="F:ribose-5-phosphate isomerase activity"/>
    <property type="evidence" value="ECO:0007669"/>
    <property type="project" value="UniProtKB-UniRule"/>
</dbReference>
<dbReference type="GO" id="GO:0009052">
    <property type="term" value="P:pentose-phosphate shunt, non-oxidative branch"/>
    <property type="evidence" value="ECO:0007669"/>
    <property type="project" value="UniProtKB-UniRule"/>
</dbReference>
<dbReference type="CDD" id="cd01398">
    <property type="entry name" value="RPI_A"/>
    <property type="match status" value="1"/>
</dbReference>
<dbReference type="FunFam" id="3.40.50.1360:FF:000001">
    <property type="entry name" value="Ribose-5-phosphate isomerase A"/>
    <property type="match status" value="1"/>
</dbReference>
<dbReference type="Gene3D" id="3.30.70.260">
    <property type="match status" value="1"/>
</dbReference>
<dbReference type="Gene3D" id="3.40.50.1360">
    <property type="match status" value="1"/>
</dbReference>
<dbReference type="HAMAP" id="MF_00170">
    <property type="entry name" value="Rib_5P_isom_A"/>
    <property type="match status" value="1"/>
</dbReference>
<dbReference type="InterPro" id="IPR037171">
    <property type="entry name" value="NagB/RpiA_transferase-like"/>
</dbReference>
<dbReference type="InterPro" id="IPR050262">
    <property type="entry name" value="Ribose-5P_isomerase"/>
</dbReference>
<dbReference type="InterPro" id="IPR020672">
    <property type="entry name" value="Ribose5P_isomerase_typA_subgr"/>
</dbReference>
<dbReference type="InterPro" id="IPR004788">
    <property type="entry name" value="Ribose5P_isomerase_type_A"/>
</dbReference>
<dbReference type="NCBIfam" id="NF001924">
    <property type="entry name" value="PRK00702.1"/>
    <property type="match status" value="1"/>
</dbReference>
<dbReference type="NCBIfam" id="TIGR00021">
    <property type="entry name" value="rpiA"/>
    <property type="match status" value="1"/>
</dbReference>
<dbReference type="PANTHER" id="PTHR43748">
    <property type="entry name" value="RIBOSE-5-PHOSPHATE ISOMERASE 3, CHLOROPLASTIC-RELATED"/>
    <property type="match status" value="1"/>
</dbReference>
<dbReference type="PANTHER" id="PTHR43748:SF3">
    <property type="entry name" value="RIBOSE-5-PHOSPHATE ISOMERASE 3, CHLOROPLASTIC-RELATED"/>
    <property type="match status" value="1"/>
</dbReference>
<dbReference type="Pfam" id="PF06026">
    <property type="entry name" value="Rib_5-P_isom_A"/>
    <property type="match status" value="1"/>
</dbReference>
<dbReference type="SUPFAM" id="SSF75445">
    <property type="entry name" value="D-ribose-5-phosphate isomerase (RpiA), lid domain"/>
    <property type="match status" value="1"/>
</dbReference>
<dbReference type="SUPFAM" id="SSF100950">
    <property type="entry name" value="NagB/RpiA/CoA transferase-like"/>
    <property type="match status" value="1"/>
</dbReference>
<comment type="function">
    <text evidence="1">Catalyzes the reversible conversion of ribose-5-phosphate to ribulose 5-phosphate.</text>
</comment>
<comment type="catalytic activity">
    <reaction evidence="1">
        <text>aldehydo-D-ribose 5-phosphate = D-ribulose 5-phosphate</text>
        <dbReference type="Rhea" id="RHEA:14657"/>
        <dbReference type="ChEBI" id="CHEBI:58121"/>
        <dbReference type="ChEBI" id="CHEBI:58273"/>
        <dbReference type="EC" id="5.3.1.6"/>
    </reaction>
</comment>
<comment type="pathway">
    <text evidence="1">Carbohydrate degradation; pentose phosphate pathway; D-ribose 5-phosphate from D-ribulose 5-phosphate (non-oxidative stage): step 1/1.</text>
</comment>
<comment type="subunit">
    <text evidence="1">Homodimer.</text>
</comment>
<comment type="similarity">
    <text evidence="1">Belongs to the ribose 5-phosphate isomerase family.</text>
</comment>
<feature type="chain" id="PRO_1000016976" description="Ribose-5-phosphate isomerase A">
    <location>
        <begin position="1"/>
        <end position="241"/>
    </location>
</feature>
<feature type="active site" description="Proton acceptor" evidence="1">
    <location>
        <position position="105"/>
    </location>
</feature>
<feature type="binding site" evidence="1">
    <location>
        <begin position="28"/>
        <end position="31"/>
    </location>
    <ligand>
        <name>substrate</name>
    </ligand>
</feature>
<feature type="binding site" evidence="1">
    <location>
        <begin position="83"/>
        <end position="86"/>
    </location>
    <ligand>
        <name>substrate</name>
    </ligand>
</feature>
<feature type="binding site" evidence="1">
    <location>
        <begin position="96"/>
        <end position="99"/>
    </location>
    <ligand>
        <name>substrate</name>
    </ligand>
</feature>
<feature type="binding site" evidence="1">
    <location>
        <position position="123"/>
    </location>
    <ligand>
        <name>substrate</name>
    </ligand>
</feature>
<proteinExistence type="inferred from homology"/>
<sequence length="241" mass="25101">MSSDELKRQAAAVALEQVRDGMKLGLGTGSTAKHFVELLGAKVQGGLQVVGVPTSEVTRADAERCGIPLATLDEVDHLDLTVDGADEIDPALNLVKGGGGALLREKIVAAASGRMIVIADDSKLVETLGRFPLPIEVIPFGLAATRRAIEQALAVCGIDGELKLRNGKDGHAFVTDGGHWIVDAHLGRIPDAPRLAGLLSVIPGIVEHGLFIGLASSVVLASPHGIRIIERPACRDSGESK</sequence>
<organism>
    <name type="scientific">Rhodopseudomonas palustris (strain BisA53)</name>
    <dbReference type="NCBI Taxonomy" id="316055"/>
    <lineage>
        <taxon>Bacteria</taxon>
        <taxon>Pseudomonadati</taxon>
        <taxon>Pseudomonadota</taxon>
        <taxon>Alphaproteobacteria</taxon>
        <taxon>Hyphomicrobiales</taxon>
        <taxon>Nitrobacteraceae</taxon>
        <taxon>Rhodopseudomonas</taxon>
    </lineage>
</organism>
<reference key="1">
    <citation type="submission" date="2006-09" db="EMBL/GenBank/DDBJ databases">
        <title>Complete sequence of Rhodopseudomonas palustris BisA53.</title>
        <authorList>
            <consortium name="US DOE Joint Genome Institute"/>
            <person name="Copeland A."/>
            <person name="Lucas S."/>
            <person name="Lapidus A."/>
            <person name="Barry K."/>
            <person name="Detter J.C."/>
            <person name="Glavina del Rio T."/>
            <person name="Hammon N."/>
            <person name="Israni S."/>
            <person name="Dalin E."/>
            <person name="Tice H."/>
            <person name="Pitluck S."/>
            <person name="Chain P."/>
            <person name="Malfatti S."/>
            <person name="Shin M."/>
            <person name="Vergez L."/>
            <person name="Schmutz J."/>
            <person name="Larimer F."/>
            <person name="Land M."/>
            <person name="Hauser L."/>
            <person name="Pelletier D.A."/>
            <person name="Kyrpides N."/>
            <person name="Kim E."/>
            <person name="Harwood C.S."/>
            <person name="Oda Y."/>
            <person name="Richardson P."/>
        </authorList>
    </citation>
    <scope>NUCLEOTIDE SEQUENCE [LARGE SCALE GENOMIC DNA]</scope>
    <source>
        <strain>BisA53</strain>
    </source>
</reference>
<keyword id="KW-0413">Isomerase</keyword>